<evidence type="ECO:0000255" key="1">
    <source>
        <dbReference type="HAMAP-Rule" id="MF_00246"/>
    </source>
</evidence>
<accession>Q8DNK7</accession>
<keyword id="KW-0067">ATP-binding</keyword>
<keyword id="KW-0119">Carbohydrate metabolism</keyword>
<keyword id="KW-0963">Cytoplasm</keyword>
<keyword id="KW-0299">Galactose metabolism</keyword>
<keyword id="KW-0418">Kinase</keyword>
<keyword id="KW-0460">Magnesium</keyword>
<keyword id="KW-0479">Metal-binding</keyword>
<keyword id="KW-0547">Nucleotide-binding</keyword>
<keyword id="KW-1185">Reference proteome</keyword>
<keyword id="KW-0808">Transferase</keyword>
<reference key="1">
    <citation type="journal article" date="2001" name="J. Bacteriol.">
        <title>Genome of the bacterium Streptococcus pneumoniae strain R6.</title>
        <authorList>
            <person name="Hoskins J."/>
            <person name="Alborn W.E. Jr."/>
            <person name="Arnold J."/>
            <person name="Blaszczak L.C."/>
            <person name="Burgett S."/>
            <person name="DeHoff B.S."/>
            <person name="Estrem S.T."/>
            <person name="Fritz L."/>
            <person name="Fu D.-J."/>
            <person name="Fuller W."/>
            <person name="Geringer C."/>
            <person name="Gilmour R."/>
            <person name="Glass J.S."/>
            <person name="Khoja H."/>
            <person name="Kraft A.R."/>
            <person name="Lagace R.E."/>
            <person name="LeBlanc D.J."/>
            <person name="Lee L.N."/>
            <person name="Lefkowitz E.J."/>
            <person name="Lu J."/>
            <person name="Matsushima P."/>
            <person name="McAhren S.M."/>
            <person name="McHenney M."/>
            <person name="McLeaster K."/>
            <person name="Mundy C.W."/>
            <person name="Nicas T.I."/>
            <person name="Norris F.H."/>
            <person name="O'Gara M."/>
            <person name="Peery R.B."/>
            <person name="Robertson G.T."/>
            <person name="Rockey P."/>
            <person name="Sun P.-M."/>
            <person name="Winkler M.E."/>
            <person name="Yang Y."/>
            <person name="Young-Bellido M."/>
            <person name="Zhao G."/>
            <person name="Zook C.A."/>
            <person name="Baltz R.H."/>
            <person name="Jaskunas S.R."/>
            <person name="Rosteck P.R. Jr."/>
            <person name="Skatrud P.L."/>
            <person name="Glass J.I."/>
        </authorList>
    </citation>
    <scope>NUCLEOTIDE SEQUENCE [LARGE SCALE GENOMIC DNA]</scope>
    <source>
        <strain>ATCC BAA-255 / R6</strain>
    </source>
</reference>
<protein>
    <recommendedName>
        <fullName evidence="1">Galactokinase</fullName>
        <ecNumber evidence="1">2.7.1.6</ecNumber>
    </recommendedName>
    <alternativeName>
        <fullName evidence="1">Galactose kinase</fullName>
    </alternativeName>
</protein>
<name>GAL1_STRR6</name>
<proteinExistence type="inferred from homology"/>
<feature type="chain" id="PRO_0000184629" description="Galactokinase">
    <location>
        <begin position="1"/>
        <end position="392"/>
    </location>
</feature>
<feature type="active site" description="Proton acceptor" evidence="1">
    <location>
        <position position="178"/>
    </location>
</feature>
<feature type="binding site" evidence="1">
    <location>
        <begin position="37"/>
        <end position="40"/>
    </location>
    <ligand>
        <name>substrate</name>
    </ligand>
</feature>
<feature type="binding site" evidence="1">
    <location>
        <position position="71"/>
    </location>
    <ligand>
        <name>ATP</name>
        <dbReference type="ChEBI" id="CHEBI:30616"/>
    </ligand>
</feature>
<feature type="binding site" evidence="1">
    <location>
        <begin position="128"/>
        <end position="134"/>
    </location>
    <ligand>
        <name>ATP</name>
        <dbReference type="ChEBI" id="CHEBI:30616"/>
    </ligand>
</feature>
<feature type="binding site" evidence="1">
    <location>
        <position position="134"/>
    </location>
    <ligand>
        <name>Mg(2+)</name>
        <dbReference type="ChEBI" id="CHEBI:18420"/>
    </ligand>
</feature>
<feature type="binding site" evidence="1">
    <location>
        <position position="166"/>
    </location>
    <ligand>
        <name>Mg(2+)</name>
        <dbReference type="ChEBI" id="CHEBI:18420"/>
    </ligand>
</feature>
<feature type="binding site" evidence="1">
    <location>
        <position position="228"/>
    </location>
    <ligand>
        <name>substrate</name>
    </ligand>
</feature>
<feature type="site" description="Transition state stabilizer" evidence="1">
    <location>
        <position position="31"/>
    </location>
</feature>
<sequence>MTQHLTAETLRKDFLAVFGQEVDQTFFSPGRINLIGEHTDYNGGHVFPVAISLGTYGAARKRDDQVLRFYSANFEDKGIIEVPLADLKFEKEHNWTNYPKGVLHFLQEAGHVIDKGFDFYVYGNIPNGSGLSSSASLEILTGVVAEHLFDLKLERLDLVKIGKQTENNFIGVNSGIMDQFAIGMGADQRAIYLDTNTLEYDLVPLDLKDNVVVIMNTNKRRELADSKYNERRAECEKAVEELQVALDIQTLGELDEWAVDQYSYLIKDENRLKRARHAVLENQRTLKAQAALQAGDLETFGRLMNASHVSLEHDYEVTGLELDTLVHTAWAQEGVLGARMTGAGFSGCAIALVQKDTVEAFKEAVGKHYEEVVGYAPSFYIAEVAGGTRVLD</sequence>
<gene>
    <name evidence="1" type="primary">galK</name>
    <name type="ordered locus">spr1668</name>
</gene>
<comment type="function">
    <text evidence="1">Catalyzes the transfer of the gamma-phosphate of ATP to D-galactose to form alpha-D-galactose-1-phosphate (Gal-1-P).</text>
</comment>
<comment type="catalytic activity">
    <reaction evidence="1">
        <text>alpha-D-galactose + ATP = alpha-D-galactose 1-phosphate + ADP + H(+)</text>
        <dbReference type="Rhea" id="RHEA:13553"/>
        <dbReference type="ChEBI" id="CHEBI:15378"/>
        <dbReference type="ChEBI" id="CHEBI:28061"/>
        <dbReference type="ChEBI" id="CHEBI:30616"/>
        <dbReference type="ChEBI" id="CHEBI:58336"/>
        <dbReference type="ChEBI" id="CHEBI:456216"/>
        <dbReference type="EC" id="2.7.1.6"/>
    </reaction>
</comment>
<comment type="pathway">
    <text evidence="1">Carbohydrate metabolism; galactose metabolism.</text>
</comment>
<comment type="subcellular location">
    <subcellularLocation>
        <location evidence="1">Cytoplasm</location>
    </subcellularLocation>
</comment>
<comment type="similarity">
    <text evidence="1">Belongs to the GHMP kinase family. GalK subfamily.</text>
</comment>
<organism>
    <name type="scientific">Streptococcus pneumoniae (strain ATCC BAA-255 / R6)</name>
    <dbReference type="NCBI Taxonomy" id="171101"/>
    <lineage>
        <taxon>Bacteria</taxon>
        <taxon>Bacillati</taxon>
        <taxon>Bacillota</taxon>
        <taxon>Bacilli</taxon>
        <taxon>Lactobacillales</taxon>
        <taxon>Streptococcaceae</taxon>
        <taxon>Streptococcus</taxon>
    </lineage>
</organism>
<dbReference type="EC" id="2.7.1.6" evidence="1"/>
<dbReference type="EMBL" id="AE007317">
    <property type="protein sequence ID" value="AAL00471.1"/>
    <property type="molecule type" value="Genomic_DNA"/>
</dbReference>
<dbReference type="PIR" id="B98080">
    <property type="entry name" value="B98080"/>
</dbReference>
<dbReference type="RefSeq" id="NP_359260.1">
    <property type="nucleotide sequence ID" value="NC_003098.1"/>
</dbReference>
<dbReference type="RefSeq" id="WP_000191983.1">
    <property type="nucleotide sequence ID" value="NC_003098.1"/>
</dbReference>
<dbReference type="SMR" id="Q8DNK7"/>
<dbReference type="STRING" id="171101.spr1668"/>
<dbReference type="KEGG" id="spr:spr1668"/>
<dbReference type="PATRIC" id="fig|171101.6.peg.1802"/>
<dbReference type="eggNOG" id="COG0153">
    <property type="taxonomic scope" value="Bacteria"/>
</dbReference>
<dbReference type="HOGENOM" id="CLU_017814_2_1_9"/>
<dbReference type="UniPathway" id="UPA00214"/>
<dbReference type="Proteomes" id="UP000000586">
    <property type="component" value="Chromosome"/>
</dbReference>
<dbReference type="GO" id="GO:0005829">
    <property type="term" value="C:cytosol"/>
    <property type="evidence" value="ECO:0000318"/>
    <property type="project" value="GO_Central"/>
</dbReference>
<dbReference type="GO" id="GO:0005524">
    <property type="term" value="F:ATP binding"/>
    <property type="evidence" value="ECO:0007669"/>
    <property type="project" value="UniProtKB-UniRule"/>
</dbReference>
<dbReference type="GO" id="GO:0004335">
    <property type="term" value="F:galactokinase activity"/>
    <property type="evidence" value="ECO:0000318"/>
    <property type="project" value="GO_Central"/>
</dbReference>
<dbReference type="GO" id="GO:0000287">
    <property type="term" value="F:magnesium ion binding"/>
    <property type="evidence" value="ECO:0007669"/>
    <property type="project" value="UniProtKB-UniRule"/>
</dbReference>
<dbReference type="GO" id="GO:0006012">
    <property type="term" value="P:galactose metabolic process"/>
    <property type="evidence" value="ECO:0000318"/>
    <property type="project" value="GO_Central"/>
</dbReference>
<dbReference type="FunFam" id="3.30.230.10:FF:000017">
    <property type="entry name" value="Galactokinase"/>
    <property type="match status" value="1"/>
</dbReference>
<dbReference type="FunFam" id="3.30.70.890:FF:000001">
    <property type="entry name" value="Galactokinase"/>
    <property type="match status" value="1"/>
</dbReference>
<dbReference type="Gene3D" id="3.30.230.10">
    <property type="match status" value="1"/>
</dbReference>
<dbReference type="Gene3D" id="3.30.70.890">
    <property type="entry name" value="GHMP kinase, C-terminal domain"/>
    <property type="match status" value="1"/>
</dbReference>
<dbReference type="HAMAP" id="MF_00246">
    <property type="entry name" value="Galactokinase"/>
    <property type="match status" value="1"/>
</dbReference>
<dbReference type="InterPro" id="IPR000705">
    <property type="entry name" value="Galactokinase"/>
</dbReference>
<dbReference type="InterPro" id="IPR022963">
    <property type="entry name" value="Galactokinase_bac"/>
</dbReference>
<dbReference type="InterPro" id="IPR019741">
    <property type="entry name" value="Galactokinase_CS"/>
</dbReference>
<dbReference type="InterPro" id="IPR019539">
    <property type="entry name" value="GalKase_N"/>
</dbReference>
<dbReference type="InterPro" id="IPR013750">
    <property type="entry name" value="GHMP_kinase_C_dom"/>
</dbReference>
<dbReference type="InterPro" id="IPR036554">
    <property type="entry name" value="GHMP_kinase_C_sf"/>
</dbReference>
<dbReference type="InterPro" id="IPR006204">
    <property type="entry name" value="GHMP_kinase_N_dom"/>
</dbReference>
<dbReference type="InterPro" id="IPR006203">
    <property type="entry name" value="GHMP_knse_ATP-bd_CS"/>
</dbReference>
<dbReference type="InterPro" id="IPR006206">
    <property type="entry name" value="Mevalonate/galactokinase"/>
</dbReference>
<dbReference type="InterPro" id="IPR020568">
    <property type="entry name" value="Ribosomal_Su5_D2-typ_SF"/>
</dbReference>
<dbReference type="InterPro" id="IPR014721">
    <property type="entry name" value="Ribsml_uS5_D2-typ_fold_subgr"/>
</dbReference>
<dbReference type="NCBIfam" id="TIGR00131">
    <property type="entry name" value="gal_kin"/>
    <property type="match status" value="1"/>
</dbReference>
<dbReference type="NCBIfam" id="NF003705">
    <property type="entry name" value="PRK05322.1"/>
    <property type="match status" value="1"/>
</dbReference>
<dbReference type="PANTHER" id="PTHR10457:SF7">
    <property type="entry name" value="GALACTOKINASE-RELATED"/>
    <property type="match status" value="1"/>
</dbReference>
<dbReference type="PANTHER" id="PTHR10457">
    <property type="entry name" value="MEVALONATE KINASE/GALACTOKINASE"/>
    <property type="match status" value="1"/>
</dbReference>
<dbReference type="Pfam" id="PF10509">
    <property type="entry name" value="GalKase_gal_bdg"/>
    <property type="match status" value="1"/>
</dbReference>
<dbReference type="Pfam" id="PF08544">
    <property type="entry name" value="GHMP_kinases_C"/>
    <property type="match status" value="1"/>
</dbReference>
<dbReference type="Pfam" id="PF00288">
    <property type="entry name" value="GHMP_kinases_N"/>
    <property type="match status" value="1"/>
</dbReference>
<dbReference type="PIRSF" id="PIRSF000530">
    <property type="entry name" value="Galactokinase"/>
    <property type="match status" value="1"/>
</dbReference>
<dbReference type="PRINTS" id="PR00473">
    <property type="entry name" value="GALCTOKINASE"/>
</dbReference>
<dbReference type="PRINTS" id="PR00959">
    <property type="entry name" value="MEVGALKINASE"/>
</dbReference>
<dbReference type="SUPFAM" id="SSF55060">
    <property type="entry name" value="GHMP Kinase, C-terminal domain"/>
    <property type="match status" value="1"/>
</dbReference>
<dbReference type="SUPFAM" id="SSF54211">
    <property type="entry name" value="Ribosomal protein S5 domain 2-like"/>
    <property type="match status" value="1"/>
</dbReference>
<dbReference type="PROSITE" id="PS00106">
    <property type="entry name" value="GALACTOKINASE"/>
    <property type="match status" value="1"/>
</dbReference>
<dbReference type="PROSITE" id="PS00627">
    <property type="entry name" value="GHMP_KINASES_ATP"/>
    <property type="match status" value="1"/>
</dbReference>